<keyword id="KW-0963">Cytoplasm</keyword>
<keyword id="KW-0233">DNA recombination</keyword>
<name>RDGC_YERPB</name>
<protein>
    <recommendedName>
        <fullName evidence="1">Recombination-associated protein RdgC</fullName>
    </recommendedName>
</protein>
<sequence length="303" mass="34204">MLWFKNLMVYRLSREVSLSADEMEKQLSAFSFTPCGSQDMAKTGWVSPMGSHSDALTHTVNGQIVICARKEEKILPSPVIKQELQDKIERLEGEQHRKLKKTEKDSLKDEVLHSLLPRAFSRFNQTFLWIDTVNDLIMVDAASAKRAEDTLALLRKSLGSLPVVPLTLENPIELTLTEWVRSKTLPAGFALMDEAELKAILEDGGVIRCKKQDLFSDEIAVHIEAGKLVTKLALDWQERIQLVLSDDGSLKRLKFADTLRDQNEDIDREDFAQRFDADFILMTSELAALIKNLIEALGGEAQH</sequence>
<feature type="chain" id="PRO_1000099080" description="Recombination-associated protein RdgC">
    <location>
        <begin position="1"/>
        <end position="303"/>
    </location>
</feature>
<evidence type="ECO:0000255" key="1">
    <source>
        <dbReference type="HAMAP-Rule" id="MF_00194"/>
    </source>
</evidence>
<comment type="function">
    <text evidence="1">May be involved in recombination.</text>
</comment>
<comment type="subcellular location">
    <subcellularLocation>
        <location evidence="1">Cytoplasm</location>
        <location evidence="1">Nucleoid</location>
    </subcellularLocation>
</comment>
<comment type="similarity">
    <text evidence="1">Belongs to the RdgC family.</text>
</comment>
<organism>
    <name type="scientific">Yersinia pseudotuberculosis serotype IB (strain PB1/+)</name>
    <dbReference type="NCBI Taxonomy" id="502801"/>
    <lineage>
        <taxon>Bacteria</taxon>
        <taxon>Pseudomonadati</taxon>
        <taxon>Pseudomonadota</taxon>
        <taxon>Gammaproteobacteria</taxon>
        <taxon>Enterobacterales</taxon>
        <taxon>Yersiniaceae</taxon>
        <taxon>Yersinia</taxon>
    </lineage>
</organism>
<gene>
    <name evidence="1" type="primary">rdgC</name>
    <name type="ordered locus">YPTS_0954</name>
</gene>
<dbReference type="EMBL" id="CP001048">
    <property type="protein sequence ID" value="ACC87935.1"/>
    <property type="molecule type" value="Genomic_DNA"/>
</dbReference>
<dbReference type="RefSeq" id="WP_002208691.1">
    <property type="nucleotide sequence ID" value="NZ_CP009780.1"/>
</dbReference>
<dbReference type="SMR" id="B2K6R1"/>
<dbReference type="GeneID" id="57975504"/>
<dbReference type="KEGG" id="ypb:YPTS_0954"/>
<dbReference type="PATRIC" id="fig|502801.10.peg.293"/>
<dbReference type="GO" id="GO:0043590">
    <property type="term" value="C:bacterial nucleoid"/>
    <property type="evidence" value="ECO:0007669"/>
    <property type="project" value="TreeGrafter"/>
</dbReference>
<dbReference type="GO" id="GO:0005737">
    <property type="term" value="C:cytoplasm"/>
    <property type="evidence" value="ECO:0007669"/>
    <property type="project" value="UniProtKB-UniRule"/>
</dbReference>
<dbReference type="GO" id="GO:0003690">
    <property type="term" value="F:double-stranded DNA binding"/>
    <property type="evidence" value="ECO:0007669"/>
    <property type="project" value="TreeGrafter"/>
</dbReference>
<dbReference type="GO" id="GO:0006310">
    <property type="term" value="P:DNA recombination"/>
    <property type="evidence" value="ECO:0007669"/>
    <property type="project" value="UniProtKB-UniRule"/>
</dbReference>
<dbReference type="GO" id="GO:0000018">
    <property type="term" value="P:regulation of DNA recombination"/>
    <property type="evidence" value="ECO:0007669"/>
    <property type="project" value="TreeGrafter"/>
</dbReference>
<dbReference type="HAMAP" id="MF_00194">
    <property type="entry name" value="RdgC"/>
    <property type="match status" value="1"/>
</dbReference>
<dbReference type="InterPro" id="IPR007476">
    <property type="entry name" value="RdgC"/>
</dbReference>
<dbReference type="NCBIfam" id="NF001460">
    <property type="entry name" value="PRK00321.1-1"/>
    <property type="match status" value="1"/>
</dbReference>
<dbReference type="NCBIfam" id="NF001462">
    <property type="entry name" value="PRK00321.1-3"/>
    <property type="match status" value="1"/>
</dbReference>
<dbReference type="NCBIfam" id="NF001464">
    <property type="entry name" value="PRK00321.1-5"/>
    <property type="match status" value="1"/>
</dbReference>
<dbReference type="PANTHER" id="PTHR38103">
    <property type="entry name" value="RECOMBINATION-ASSOCIATED PROTEIN RDGC"/>
    <property type="match status" value="1"/>
</dbReference>
<dbReference type="PANTHER" id="PTHR38103:SF1">
    <property type="entry name" value="RECOMBINATION-ASSOCIATED PROTEIN RDGC"/>
    <property type="match status" value="1"/>
</dbReference>
<dbReference type="Pfam" id="PF04381">
    <property type="entry name" value="RdgC"/>
    <property type="match status" value="1"/>
</dbReference>
<reference key="1">
    <citation type="submission" date="2008-04" db="EMBL/GenBank/DDBJ databases">
        <title>Complete sequence of Yersinia pseudotuberculosis PB1/+.</title>
        <authorList>
            <person name="Copeland A."/>
            <person name="Lucas S."/>
            <person name="Lapidus A."/>
            <person name="Glavina del Rio T."/>
            <person name="Dalin E."/>
            <person name="Tice H."/>
            <person name="Bruce D."/>
            <person name="Goodwin L."/>
            <person name="Pitluck S."/>
            <person name="Munk A.C."/>
            <person name="Brettin T."/>
            <person name="Detter J.C."/>
            <person name="Han C."/>
            <person name="Tapia R."/>
            <person name="Schmutz J."/>
            <person name="Larimer F."/>
            <person name="Land M."/>
            <person name="Hauser L."/>
            <person name="Challacombe J.F."/>
            <person name="Green L."/>
            <person name="Lindler L.E."/>
            <person name="Nikolich M.P."/>
            <person name="Richardson P."/>
        </authorList>
    </citation>
    <scope>NUCLEOTIDE SEQUENCE [LARGE SCALE GENOMIC DNA]</scope>
    <source>
        <strain>PB1/+</strain>
    </source>
</reference>
<accession>B2K6R1</accession>
<proteinExistence type="inferred from homology"/>